<feature type="chain" id="PRO_1000079373" description="Light-independent protochlorophyllide reductase subunit N">
    <location>
        <begin position="1"/>
        <end position="470"/>
    </location>
</feature>
<feature type="binding site" evidence="1">
    <location>
        <position position="24"/>
    </location>
    <ligand>
        <name>[4Fe-4S] cluster</name>
        <dbReference type="ChEBI" id="CHEBI:49883"/>
        <note>ligand shared with heterodimeric partner</note>
    </ligand>
</feature>
<feature type="binding site" evidence="1">
    <location>
        <position position="49"/>
    </location>
    <ligand>
        <name>[4Fe-4S] cluster</name>
        <dbReference type="ChEBI" id="CHEBI:49883"/>
        <note>ligand shared with heterodimeric partner</note>
    </ligand>
</feature>
<feature type="binding site" evidence="1">
    <location>
        <position position="109"/>
    </location>
    <ligand>
        <name>[4Fe-4S] cluster</name>
        <dbReference type="ChEBI" id="CHEBI:49883"/>
        <note>ligand shared with heterodimeric partner</note>
    </ligand>
</feature>
<proteinExistence type="inferred from homology"/>
<accession>B0C7T1</accession>
<dbReference type="EC" id="1.3.7.7" evidence="1"/>
<dbReference type="EMBL" id="CP000828">
    <property type="protein sequence ID" value="ABW26472.1"/>
    <property type="molecule type" value="Genomic_DNA"/>
</dbReference>
<dbReference type="RefSeq" id="WP_012162003.1">
    <property type="nucleotide sequence ID" value="NC_009925.1"/>
</dbReference>
<dbReference type="SMR" id="B0C7T1"/>
<dbReference type="STRING" id="329726.AM1_1444"/>
<dbReference type="KEGG" id="amr:AM1_1444"/>
<dbReference type="eggNOG" id="COG2710">
    <property type="taxonomic scope" value="Bacteria"/>
</dbReference>
<dbReference type="HOGENOM" id="CLU_037170_0_0_3"/>
<dbReference type="OrthoDB" id="5714774at2"/>
<dbReference type="UniPathway" id="UPA00670"/>
<dbReference type="Proteomes" id="UP000000268">
    <property type="component" value="Chromosome"/>
</dbReference>
<dbReference type="GO" id="GO:0051539">
    <property type="term" value="F:4 iron, 4 sulfur cluster binding"/>
    <property type="evidence" value="ECO:0007669"/>
    <property type="project" value="UniProtKB-UniRule"/>
</dbReference>
<dbReference type="GO" id="GO:0005524">
    <property type="term" value="F:ATP binding"/>
    <property type="evidence" value="ECO:0007669"/>
    <property type="project" value="UniProtKB-UniRule"/>
</dbReference>
<dbReference type="GO" id="GO:0046872">
    <property type="term" value="F:metal ion binding"/>
    <property type="evidence" value="ECO:0007669"/>
    <property type="project" value="UniProtKB-KW"/>
</dbReference>
<dbReference type="GO" id="GO:0016730">
    <property type="term" value="F:oxidoreductase activity, acting on iron-sulfur proteins as donors"/>
    <property type="evidence" value="ECO:0007669"/>
    <property type="project" value="InterPro"/>
</dbReference>
<dbReference type="GO" id="GO:0016636">
    <property type="term" value="F:oxidoreductase activity, acting on the CH-CH group of donors, iron-sulfur protein as acceptor"/>
    <property type="evidence" value="ECO:0007669"/>
    <property type="project" value="UniProtKB-UniRule"/>
</dbReference>
<dbReference type="GO" id="GO:0036068">
    <property type="term" value="P:light-independent chlorophyll biosynthetic process"/>
    <property type="evidence" value="ECO:0007669"/>
    <property type="project" value="UniProtKB-UniRule"/>
</dbReference>
<dbReference type="GO" id="GO:0019685">
    <property type="term" value="P:photosynthesis, dark reaction"/>
    <property type="evidence" value="ECO:0007669"/>
    <property type="project" value="InterPro"/>
</dbReference>
<dbReference type="CDD" id="cd01979">
    <property type="entry name" value="Pchlide_reductase_N"/>
    <property type="match status" value="1"/>
</dbReference>
<dbReference type="Gene3D" id="3.40.50.1980">
    <property type="entry name" value="Nitrogenase molybdenum iron protein domain"/>
    <property type="match status" value="3"/>
</dbReference>
<dbReference type="HAMAP" id="MF_00352">
    <property type="entry name" value="ChlN_BchN"/>
    <property type="match status" value="1"/>
</dbReference>
<dbReference type="InterPro" id="IPR050293">
    <property type="entry name" value="LIPOR_BchN/ChlN"/>
</dbReference>
<dbReference type="InterPro" id="IPR000510">
    <property type="entry name" value="Nase/OxRdtase_comp1"/>
</dbReference>
<dbReference type="InterPro" id="IPR005970">
    <property type="entry name" value="Protochl_reductN"/>
</dbReference>
<dbReference type="NCBIfam" id="TIGR01279">
    <property type="entry name" value="DPOR_bchN"/>
    <property type="match status" value="1"/>
</dbReference>
<dbReference type="NCBIfam" id="NF002768">
    <property type="entry name" value="PRK02842.1"/>
    <property type="match status" value="1"/>
</dbReference>
<dbReference type="PANTHER" id="PTHR39429">
    <property type="entry name" value="LIGHT-INDEPENDENT PROTOCHLOROPHYLLIDE REDUCTASE SUBUNIT N"/>
    <property type="match status" value="1"/>
</dbReference>
<dbReference type="PANTHER" id="PTHR39429:SF3">
    <property type="entry name" value="LIGHT-INDEPENDENT PROTOCHLOROPHYLLIDE REDUCTASE SUBUNIT N"/>
    <property type="match status" value="1"/>
</dbReference>
<dbReference type="Pfam" id="PF00148">
    <property type="entry name" value="Oxidored_nitro"/>
    <property type="match status" value="1"/>
</dbReference>
<dbReference type="PIRSF" id="PIRSF000162">
    <property type="entry name" value="P_chlorophyll_rd"/>
    <property type="match status" value="1"/>
</dbReference>
<dbReference type="SUPFAM" id="SSF53807">
    <property type="entry name" value="Helical backbone' metal receptor"/>
    <property type="match status" value="1"/>
</dbReference>
<protein>
    <recommendedName>
        <fullName evidence="1">Light-independent protochlorophyllide reductase subunit N</fullName>
        <shortName evidence="1">DPOR subunit N</shortName>
        <shortName evidence="1">LI-POR subunit N</shortName>
        <ecNumber evidence="1">1.3.7.7</ecNumber>
    </recommendedName>
</protein>
<reference key="1">
    <citation type="journal article" date="2008" name="Proc. Natl. Acad. Sci. U.S.A.">
        <title>Niche adaptation and genome expansion in the chlorophyll d-producing cyanobacterium Acaryochloris marina.</title>
        <authorList>
            <person name="Swingley W.D."/>
            <person name="Chen M."/>
            <person name="Cheung P.C."/>
            <person name="Conrad A.L."/>
            <person name="Dejesa L.C."/>
            <person name="Hao J."/>
            <person name="Honchak B.M."/>
            <person name="Karbach L.E."/>
            <person name="Kurdoglu A."/>
            <person name="Lahiri S."/>
            <person name="Mastrian S.D."/>
            <person name="Miyashita H."/>
            <person name="Page L."/>
            <person name="Ramakrishna P."/>
            <person name="Satoh S."/>
            <person name="Sattley W.M."/>
            <person name="Shimada Y."/>
            <person name="Taylor H.L."/>
            <person name="Tomo T."/>
            <person name="Tsuchiya T."/>
            <person name="Wang Z.T."/>
            <person name="Raymond J."/>
            <person name="Mimuro M."/>
            <person name="Blankenship R.E."/>
            <person name="Touchman J.W."/>
        </authorList>
    </citation>
    <scope>NUCLEOTIDE SEQUENCE [LARGE SCALE GENOMIC DNA]</scope>
    <source>
        <strain>MBIC 11017</strain>
    </source>
</reference>
<gene>
    <name evidence="1" type="primary">chlN</name>
    <name type="ordered locus">AM1_1444</name>
</gene>
<evidence type="ECO:0000255" key="1">
    <source>
        <dbReference type="HAMAP-Rule" id="MF_00352"/>
    </source>
</evidence>
<keyword id="KW-0004">4Fe-4S</keyword>
<keyword id="KW-0067">ATP-binding</keyword>
<keyword id="KW-0149">Chlorophyll biosynthesis</keyword>
<keyword id="KW-0408">Iron</keyword>
<keyword id="KW-0411">Iron-sulfur</keyword>
<keyword id="KW-0479">Metal-binding</keyword>
<keyword id="KW-0547">Nucleotide-binding</keyword>
<keyword id="KW-0560">Oxidoreductase</keyword>
<keyword id="KW-0602">Photosynthesis</keyword>
<keyword id="KW-1185">Reference proteome</keyword>
<comment type="function">
    <text evidence="1">Component of the dark-operative protochlorophyllide reductase (DPOR) that uses Mg-ATP and reduced ferredoxin to reduce ring D of protochlorophyllide (Pchlide) to form chlorophyllide a (Chlide). This reaction is light-independent. The NB-protein (ChlN-ChlB) is the catalytic component of the complex.</text>
</comment>
<comment type="catalytic activity">
    <reaction evidence="1">
        <text>chlorophyllide a + oxidized 2[4Fe-4S]-[ferredoxin] + 2 ADP + 2 phosphate = protochlorophyllide a + reduced 2[4Fe-4S]-[ferredoxin] + 2 ATP + 2 H2O</text>
        <dbReference type="Rhea" id="RHEA:28202"/>
        <dbReference type="Rhea" id="RHEA-COMP:10002"/>
        <dbReference type="Rhea" id="RHEA-COMP:10004"/>
        <dbReference type="ChEBI" id="CHEBI:15377"/>
        <dbReference type="ChEBI" id="CHEBI:30616"/>
        <dbReference type="ChEBI" id="CHEBI:33722"/>
        <dbReference type="ChEBI" id="CHEBI:33723"/>
        <dbReference type="ChEBI" id="CHEBI:43474"/>
        <dbReference type="ChEBI" id="CHEBI:83348"/>
        <dbReference type="ChEBI" id="CHEBI:83350"/>
        <dbReference type="ChEBI" id="CHEBI:456216"/>
        <dbReference type="EC" id="1.3.7.7"/>
    </reaction>
</comment>
<comment type="cofactor">
    <cofactor evidence="1">
        <name>[4Fe-4S] cluster</name>
        <dbReference type="ChEBI" id="CHEBI:49883"/>
    </cofactor>
    <text evidence="1">Binds 1 [4Fe-4S] cluster per heterodimer. The cluster is bound at the heterodimer interface by residues from both subunits.</text>
</comment>
<comment type="pathway">
    <text evidence="1">Porphyrin-containing compound metabolism; chlorophyll biosynthesis (light-independent).</text>
</comment>
<comment type="subunit">
    <text evidence="1">Protochlorophyllide reductase is composed of three subunits; ChlL, ChlN and ChlB. Forms a heterotetramer of two ChlB and two ChlN subunits.</text>
</comment>
<comment type="similarity">
    <text evidence="1">Belongs to the BchN/ChlN family.</text>
</comment>
<sequence>MTLADAQPQALDFECETGNYHTFCPISCVAWLYQKIEDSFFLVIGTKTCGYFLQNAMGVMIFAEPRYAMAELEEGDISAKLNDYEELKRLCMQIKRDRNPSVIVWIGTCTTEIIKMDLEGLAPRLESEIDIPIVVARANGLDYAFTQGEDTVLAAMAHRCPKGSAVVEESEKQERGNAITSLLNFGKKKEEVVAEESEYHDHAPLVMFGSLPDPVVTQLTLELKKQGIKVNGWLPAKRFTELPVIDEGYYVAGVNPFLSRTATTLMRRRKCKLIGAPFPIGPDGTRAWIEKICSVLDVEPKGLEEREAKIWANLEDYLEIIRGKSVFFMGDNLLEVSLARFLIRCGMTCPEIGIPYMDKRYQGAELKFLEQTCIDMGVPMPKIVEKPDNYNQVQRIYEHDVDLVITGMAHANPLEARGINTKWSVEFTFAQIHGFTNARDILELVTRPLRRNNSLKDLGWDKLVKEEAKV</sequence>
<name>CHLN_ACAM1</name>
<organism>
    <name type="scientific">Acaryochloris marina (strain MBIC 11017)</name>
    <dbReference type="NCBI Taxonomy" id="329726"/>
    <lineage>
        <taxon>Bacteria</taxon>
        <taxon>Bacillati</taxon>
        <taxon>Cyanobacteriota</taxon>
        <taxon>Cyanophyceae</taxon>
        <taxon>Acaryochloridales</taxon>
        <taxon>Acaryochloridaceae</taxon>
        <taxon>Acaryochloris</taxon>
    </lineage>
</organism>